<protein>
    <recommendedName>
        <fullName>ATP-dependent RNA helicase DBP3</fullName>
        <ecNumber>3.6.4.13</ecNumber>
    </recommendedName>
</protein>
<keyword id="KW-0067">ATP-binding</keyword>
<keyword id="KW-0347">Helicase</keyword>
<keyword id="KW-0378">Hydrolase</keyword>
<keyword id="KW-0547">Nucleotide-binding</keyword>
<keyword id="KW-0539">Nucleus</keyword>
<keyword id="KW-1185">Reference proteome</keyword>
<keyword id="KW-0690">Ribosome biogenesis</keyword>
<keyword id="KW-0694">RNA-binding</keyword>
<keyword id="KW-0698">rRNA processing</keyword>
<organism>
    <name type="scientific">Scheffersomyces stipitis (strain ATCC 58785 / CBS 6054 / NBRC 10063 / NRRL Y-11545)</name>
    <name type="common">Yeast</name>
    <name type="synonym">Pichia stipitis</name>
    <dbReference type="NCBI Taxonomy" id="322104"/>
    <lineage>
        <taxon>Eukaryota</taxon>
        <taxon>Fungi</taxon>
        <taxon>Dikarya</taxon>
        <taxon>Ascomycota</taxon>
        <taxon>Saccharomycotina</taxon>
        <taxon>Pichiomycetes</taxon>
        <taxon>Debaryomycetaceae</taxon>
        <taxon>Scheffersomyces</taxon>
    </lineage>
</organism>
<evidence type="ECO:0000250" key="1"/>
<evidence type="ECO:0000255" key="2">
    <source>
        <dbReference type="PROSITE-ProRule" id="PRU00541"/>
    </source>
</evidence>
<evidence type="ECO:0000255" key="3">
    <source>
        <dbReference type="PROSITE-ProRule" id="PRU00542"/>
    </source>
</evidence>
<evidence type="ECO:0000256" key="4">
    <source>
        <dbReference type="SAM" id="MobiDB-lite"/>
    </source>
</evidence>
<evidence type="ECO:0000305" key="5"/>
<dbReference type="EC" id="3.6.4.13"/>
<dbReference type="EMBL" id="CP000497">
    <property type="protein sequence ID" value="ABN65800.1"/>
    <property type="molecule type" value="Genomic_DNA"/>
</dbReference>
<dbReference type="RefSeq" id="XP_001383829.1">
    <property type="nucleotide sequence ID" value="XM_001383792.1"/>
</dbReference>
<dbReference type="SMR" id="A3LRW2"/>
<dbReference type="FunCoup" id="A3LRW2">
    <property type="interactions" value="419"/>
</dbReference>
<dbReference type="STRING" id="322104.A3LRW2"/>
<dbReference type="GeneID" id="4837793"/>
<dbReference type="KEGG" id="pic:PICST_82655"/>
<dbReference type="eggNOG" id="KOG0331">
    <property type="taxonomic scope" value="Eukaryota"/>
</dbReference>
<dbReference type="HOGENOM" id="CLU_003041_1_5_1"/>
<dbReference type="InParanoid" id="A3LRW2"/>
<dbReference type="OMA" id="KKTHDMY"/>
<dbReference type="OrthoDB" id="196131at2759"/>
<dbReference type="Proteomes" id="UP000002258">
    <property type="component" value="Chromosome 3"/>
</dbReference>
<dbReference type="GO" id="GO:0005730">
    <property type="term" value="C:nucleolus"/>
    <property type="evidence" value="ECO:0007669"/>
    <property type="project" value="UniProtKB-SubCell"/>
</dbReference>
<dbReference type="GO" id="GO:0030687">
    <property type="term" value="C:preribosome, large subunit precursor"/>
    <property type="evidence" value="ECO:0007669"/>
    <property type="project" value="EnsemblFungi"/>
</dbReference>
<dbReference type="GO" id="GO:0005524">
    <property type="term" value="F:ATP binding"/>
    <property type="evidence" value="ECO:0007669"/>
    <property type="project" value="UniProtKB-KW"/>
</dbReference>
<dbReference type="GO" id="GO:0016887">
    <property type="term" value="F:ATP hydrolysis activity"/>
    <property type="evidence" value="ECO:0007669"/>
    <property type="project" value="RHEA"/>
</dbReference>
<dbReference type="GO" id="GO:0003723">
    <property type="term" value="F:RNA binding"/>
    <property type="evidence" value="ECO:0007669"/>
    <property type="project" value="UniProtKB-KW"/>
</dbReference>
<dbReference type="GO" id="GO:0003724">
    <property type="term" value="F:RNA helicase activity"/>
    <property type="evidence" value="ECO:0007669"/>
    <property type="project" value="UniProtKB-EC"/>
</dbReference>
<dbReference type="GO" id="GO:0000464">
    <property type="term" value="P:endonucleolytic cleavage in ITS1 upstream of 5.8S rRNA from tricistronic rRNA transcript (SSU-rRNA, 5.8S rRNA, LSU-rRNA)"/>
    <property type="evidence" value="ECO:0007669"/>
    <property type="project" value="EnsemblFungi"/>
</dbReference>
<dbReference type="CDD" id="cd00268">
    <property type="entry name" value="DEADc"/>
    <property type="match status" value="1"/>
</dbReference>
<dbReference type="CDD" id="cd18787">
    <property type="entry name" value="SF2_C_DEAD"/>
    <property type="match status" value="1"/>
</dbReference>
<dbReference type="FunFam" id="3.40.50.300:FF:000008">
    <property type="entry name" value="ATP-dependent RNA helicase RhlB"/>
    <property type="match status" value="1"/>
</dbReference>
<dbReference type="Gene3D" id="3.40.50.300">
    <property type="entry name" value="P-loop containing nucleotide triphosphate hydrolases"/>
    <property type="match status" value="2"/>
</dbReference>
<dbReference type="InterPro" id="IPR011545">
    <property type="entry name" value="DEAD/DEAH_box_helicase_dom"/>
</dbReference>
<dbReference type="InterPro" id="IPR014001">
    <property type="entry name" value="Helicase_ATP-bd"/>
</dbReference>
<dbReference type="InterPro" id="IPR001650">
    <property type="entry name" value="Helicase_C-like"/>
</dbReference>
<dbReference type="InterPro" id="IPR027417">
    <property type="entry name" value="P-loop_NTPase"/>
</dbReference>
<dbReference type="InterPro" id="IPR000629">
    <property type="entry name" value="RNA-helicase_DEAD-box_CS"/>
</dbReference>
<dbReference type="PANTHER" id="PTHR47958">
    <property type="entry name" value="ATP-DEPENDENT RNA HELICASE DBP3"/>
    <property type="match status" value="1"/>
</dbReference>
<dbReference type="Pfam" id="PF00270">
    <property type="entry name" value="DEAD"/>
    <property type="match status" value="1"/>
</dbReference>
<dbReference type="Pfam" id="PF00271">
    <property type="entry name" value="Helicase_C"/>
    <property type="match status" value="1"/>
</dbReference>
<dbReference type="SMART" id="SM00487">
    <property type="entry name" value="DEXDc"/>
    <property type="match status" value="1"/>
</dbReference>
<dbReference type="SMART" id="SM00490">
    <property type="entry name" value="HELICc"/>
    <property type="match status" value="1"/>
</dbReference>
<dbReference type="SUPFAM" id="SSF52540">
    <property type="entry name" value="P-loop containing nucleoside triphosphate hydrolases"/>
    <property type="match status" value="1"/>
</dbReference>
<dbReference type="PROSITE" id="PS00039">
    <property type="entry name" value="DEAD_ATP_HELICASE"/>
    <property type="match status" value="1"/>
</dbReference>
<dbReference type="PROSITE" id="PS51192">
    <property type="entry name" value="HELICASE_ATP_BIND_1"/>
    <property type="match status" value="1"/>
</dbReference>
<dbReference type="PROSITE" id="PS51194">
    <property type="entry name" value="HELICASE_CTER"/>
    <property type="match status" value="1"/>
</dbReference>
<dbReference type="PROSITE" id="PS51195">
    <property type="entry name" value="Q_MOTIF"/>
    <property type="match status" value="1"/>
</dbReference>
<proteinExistence type="inferred from homology"/>
<reference key="1">
    <citation type="journal article" date="2007" name="Nat. Biotechnol.">
        <title>Genome sequence of the lignocellulose-bioconverting and xylose-fermenting yeast Pichia stipitis.</title>
        <authorList>
            <person name="Jeffries T.W."/>
            <person name="Grigoriev I.V."/>
            <person name="Grimwood J."/>
            <person name="Laplaza J.M."/>
            <person name="Aerts A."/>
            <person name="Salamov A."/>
            <person name="Schmutz J."/>
            <person name="Lindquist E."/>
            <person name="Dehal P."/>
            <person name="Shapiro H."/>
            <person name="Jin Y.-S."/>
            <person name="Passoth V."/>
            <person name="Richardson P.M."/>
        </authorList>
    </citation>
    <scope>NUCLEOTIDE SEQUENCE [LARGE SCALE GENOMIC DNA]</scope>
    <source>
        <strain>ATCC 58785 / CBS 6054 / NBRC 10063 / NRRL Y-11545</strain>
    </source>
</reference>
<accession>A3LRW2</accession>
<gene>
    <name type="primary">DBP3</name>
    <name type="ORF">PICST_82655</name>
</gene>
<name>DBP3_PICST</name>
<comment type="function">
    <text evidence="1">ATP-dependent RNA helicase required for 60S ribosomal subunit synthesis. Involved in efficient pre-rRNA processing, predominantly at site A3, which is necessary for the normal formation of 25S and 5.8S rRNAs (By similarity).</text>
</comment>
<comment type="catalytic activity">
    <reaction>
        <text>ATP + H2O = ADP + phosphate + H(+)</text>
        <dbReference type="Rhea" id="RHEA:13065"/>
        <dbReference type="ChEBI" id="CHEBI:15377"/>
        <dbReference type="ChEBI" id="CHEBI:15378"/>
        <dbReference type="ChEBI" id="CHEBI:30616"/>
        <dbReference type="ChEBI" id="CHEBI:43474"/>
        <dbReference type="ChEBI" id="CHEBI:456216"/>
        <dbReference type="EC" id="3.6.4.13"/>
    </reaction>
</comment>
<comment type="subcellular location">
    <subcellularLocation>
        <location evidence="1">Nucleus</location>
        <location evidence="1">Nucleolus</location>
    </subcellularLocation>
</comment>
<comment type="domain">
    <text>The Q motif is unique to and characteristic of the DEAD box family of RNA helicases and controls ATP binding and hydrolysis.</text>
</comment>
<comment type="similarity">
    <text evidence="5">Belongs to the DEAD box helicase family. DDX5/DBP2 subfamily.</text>
</comment>
<sequence length="526" mass="58438">MVEEHKNKKRRQEDGPADVPEKKVKVSKSEKKDKKEKKEKKEKKEKKEKKEKKEKKEKKEKKKKYEHTATISGSAQSSQGYTQSESLTNLPQSEIDSFLATNEVTIEDPHSLNLRPLLSFDQIQLNSKISAVVNKFPTPTPIQSVAWPYLLSGKDVIGVAETGSGKTFAFGVPAINNILTLGKSGLSVLCISPTRELASQIYDNLVDLTSNTNVKCVCVYGGVPKHDQVKNLKNANVVVATPGRLLDLIEDGAVNLGTVDYLVLDEADRMLETGFEDAIKAIIGGTKKENRQTLMFTATWPQEVRKLASTFMNQPVKVSIGDRDELAANKRITQIVEVIEPFDKEKKLLGLLRQYQSGSKKNDKVLIFALYKKEATRIEGLLRRNSYNVAAIHGDLSQQQRTNALNSFKKGESSLLLATDVAARGLDIPNVKVVINLTFPLTVEDYVHRIGRTGRAGQTGTAHTLFTEHEKHLSGALMNILRGANQPVPDELLKFGGHTKKKAHSAYGAFFKDVDMTKTAKKIKFD</sequence>
<feature type="chain" id="PRO_0000285139" description="ATP-dependent RNA helicase DBP3">
    <location>
        <begin position="1"/>
        <end position="526"/>
    </location>
</feature>
<feature type="domain" description="Helicase ATP-binding" evidence="2">
    <location>
        <begin position="147"/>
        <end position="318"/>
    </location>
</feature>
<feature type="domain" description="Helicase C-terminal" evidence="3">
    <location>
        <begin position="334"/>
        <end position="496"/>
    </location>
</feature>
<feature type="region of interest" description="Disordered" evidence="4">
    <location>
        <begin position="1"/>
        <end position="86"/>
    </location>
</feature>
<feature type="short sequence motif" description="Q motif">
    <location>
        <begin position="118"/>
        <end position="144"/>
    </location>
</feature>
<feature type="short sequence motif" description="DEAD box">
    <location>
        <begin position="265"/>
        <end position="268"/>
    </location>
</feature>
<feature type="compositionally biased region" description="Basic and acidic residues" evidence="4">
    <location>
        <begin position="1"/>
        <end position="33"/>
    </location>
</feature>
<feature type="compositionally biased region" description="Basic residues" evidence="4">
    <location>
        <begin position="34"/>
        <end position="65"/>
    </location>
</feature>
<feature type="compositionally biased region" description="Polar residues" evidence="4">
    <location>
        <begin position="69"/>
        <end position="86"/>
    </location>
</feature>
<feature type="binding site" evidence="2">
    <location>
        <begin position="160"/>
        <end position="167"/>
    </location>
    <ligand>
        <name>ATP</name>
        <dbReference type="ChEBI" id="CHEBI:30616"/>
    </ligand>
</feature>